<organism>
    <name type="scientific">Rickettsia conorii (strain ATCC VR-613 / Malish 7)</name>
    <dbReference type="NCBI Taxonomy" id="272944"/>
    <lineage>
        <taxon>Bacteria</taxon>
        <taxon>Pseudomonadati</taxon>
        <taxon>Pseudomonadota</taxon>
        <taxon>Alphaproteobacteria</taxon>
        <taxon>Rickettsiales</taxon>
        <taxon>Rickettsiaceae</taxon>
        <taxon>Rickettsieae</taxon>
        <taxon>Rickettsia</taxon>
        <taxon>spotted fever group</taxon>
    </lineage>
</organism>
<protein>
    <recommendedName>
        <fullName evidence="1">Small ribosomal subunit protein uS19</fullName>
    </recommendedName>
    <alternativeName>
        <fullName evidence="2">30S ribosomal protein S19</fullName>
    </alternativeName>
</protein>
<feature type="chain" id="PRO_0000129891" description="Small ribosomal subunit protein uS19">
    <location>
        <begin position="1"/>
        <end position="92"/>
    </location>
</feature>
<evidence type="ECO:0000255" key="1">
    <source>
        <dbReference type="HAMAP-Rule" id="MF_00531"/>
    </source>
</evidence>
<evidence type="ECO:0000305" key="2"/>
<dbReference type="EMBL" id="AE006914">
    <property type="protein sequence ID" value="AAL03540.1"/>
    <property type="molecule type" value="Genomic_DNA"/>
</dbReference>
<dbReference type="PIR" id="B97825">
    <property type="entry name" value="B97825"/>
</dbReference>
<dbReference type="RefSeq" id="WP_004997794.1">
    <property type="nucleotide sequence ID" value="NC_003103.1"/>
</dbReference>
<dbReference type="SMR" id="Q92GX0"/>
<dbReference type="GeneID" id="95361482"/>
<dbReference type="KEGG" id="rco:RC1002"/>
<dbReference type="HOGENOM" id="CLU_144911_0_1_5"/>
<dbReference type="Proteomes" id="UP000000816">
    <property type="component" value="Chromosome"/>
</dbReference>
<dbReference type="GO" id="GO:0005737">
    <property type="term" value="C:cytoplasm"/>
    <property type="evidence" value="ECO:0007669"/>
    <property type="project" value="UniProtKB-ARBA"/>
</dbReference>
<dbReference type="GO" id="GO:0015935">
    <property type="term" value="C:small ribosomal subunit"/>
    <property type="evidence" value="ECO:0007669"/>
    <property type="project" value="InterPro"/>
</dbReference>
<dbReference type="GO" id="GO:0019843">
    <property type="term" value="F:rRNA binding"/>
    <property type="evidence" value="ECO:0007669"/>
    <property type="project" value="UniProtKB-UniRule"/>
</dbReference>
<dbReference type="GO" id="GO:0003735">
    <property type="term" value="F:structural constituent of ribosome"/>
    <property type="evidence" value="ECO:0007669"/>
    <property type="project" value="InterPro"/>
</dbReference>
<dbReference type="GO" id="GO:0000028">
    <property type="term" value="P:ribosomal small subunit assembly"/>
    <property type="evidence" value="ECO:0007669"/>
    <property type="project" value="TreeGrafter"/>
</dbReference>
<dbReference type="GO" id="GO:0006412">
    <property type="term" value="P:translation"/>
    <property type="evidence" value="ECO:0007669"/>
    <property type="project" value="UniProtKB-UniRule"/>
</dbReference>
<dbReference type="FunFam" id="3.30.860.10:FF:000001">
    <property type="entry name" value="30S ribosomal protein S19"/>
    <property type="match status" value="1"/>
</dbReference>
<dbReference type="Gene3D" id="3.30.860.10">
    <property type="entry name" value="30s Ribosomal Protein S19, Chain A"/>
    <property type="match status" value="1"/>
</dbReference>
<dbReference type="HAMAP" id="MF_00531">
    <property type="entry name" value="Ribosomal_uS19"/>
    <property type="match status" value="1"/>
</dbReference>
<dbReference type="InterPro" id="IPR002222">
    <property type="entry name" value="Ribosomal_uS19"/>
</dbReference>
<dbReference type="InterPro" id="IPR005732">
    <property type="entry name" value="Ribosomal_uS19_bac-type"/>
</dbReference>
<dbReference type="InterPro" id="IPR020934">
    <property type="entry name" value="Ribosomal_uS19_CS"/>
</dbReference>
<dbReference type="InterPro" id="IPR023575">
    <property type="entry name" value="Ribosomal_uS19_SF"/>
</dbReference>
<dbReference type="NCBIfam" id="TIGR01050">
    <property type="entry name" value="rpsS_bact"/>
    <property type="match status" value="1"/>
</dbReference>
<dbReference type="PANTHER" id="PTHR11880">
    <property type="entry name" value="RIBOSOMAL PROTEIN S19P FAMILY MEMBER"/>
    <property type="match status" value="1"/>
</dbReference>
<dbReference type="PANTHER" id="PTHR11880:SF8">
    <property type="entry name" value="SMALL RIBOSOMAL SUBUNIT PROTEIN US19M"/>
    <property type="match status" value="1"/>
</dbReference>
<dbReference type="Pfam" id="PF00203">
    <property type="entry name" value="Ribosomal_S19"/>
    <property type="match status" value="1"/>
</dbReference>
<dbReference type="PIRSF" id="PIRSF002144">
    <property type="entry name" value="Ribosomal_S19"/>
    <property type="match status" value="1"/>
</dbReference>
<dbReference type="PRINTS" id="PR00975">
    <property type="entry name" value="RIBOSOMALS19"/>
</dbReference>
<dbReference type="SUPFAM" id="SSF54570">
    <property type="entry name" value="Ribosomal protein S19"/>
    <property type="match status" value="1"/>
</dbReference>
<dbReference type="PROSITE" id="PS00323">
    <property type="entry name" value="RIBOSOMAL_S19"/>
    <property type="match status" value="1"/>
</dbReference>
<comment type="function">
    <text evidence="1">Protein S19 forms a complex with S13 that binds strongly to the 16S ribosomal RNA.</text>
</comment>
<comment type="similarity">
    <text evidence="1">Belongs to the universal ribosomal protein uS19 family.</text>
</comment>
<reference key="1">
    <citation type="journal article" date="2001" name="Science">
        <title>Mechanisms of evolution in Rickettsia conorii and R. prowazekii.</title>
        <authorList>
            <person name="Ogata H."/>
            <person name="Audic S."/>
            <person name="Renesto-Audiffren P."/>
            <person name="Fournier P.-E."/>
            <person name="Barbe V."/>
            <person name="Samson D."/>
            <person name="Roux V."/>
            <person name="Cossart P."/>
            <person name="Weissenbach J."/>
            <person name="Claverie J.-M."/>
            <person name="Raoult D."/>
        </authorList>
    </citation>
    <scope>NUCLEOTIDE SEQUENCE [LARGE SCALE GENOMIC DNA]</scope>
    <source>
        <strain>ATCC VR-613 / Malish 7</strain>
    </source>
</reference>
<proteinExistence type="inferred from homology"/>
<accession>Q92GX0</accession>
<sequence>MARSIWKGPFVDGYLIKKVQKLMESGKSEMIKTWSRRSTILPIFVGFTFSVHNGNKFIPVSVNEEMVGRKLGEFAPTRTFHGHGADKKIKRK</sequence>
<keyword id="KW-0687">Ribonucleoprotein</keyword>
<keyword id="KW-0689">Ribosomal protein</keyword>
<keyword id="KW-0694">RNA-binding</keyword>
<keyword id="KW-0699">rRNA-binding</keyword>
<name>RS19_RICCN</name>
<gene>
    <name evidence="1" type="primary">rpsS</name>
    <name type="ordered locus">RC1002</name>
</gene>